<sequence length="878" mass="99446">MSSDNNDNNNNHSYKEANYYNYYRLLENNLKKKSRGLFLTENNKKKSKVFKLTKFSIDTEINDCSSTSKWTQIYSNDSKTPIEARYKIPLHPTWIITDFRVESQDKVVVLIGKIKEHEKALNNYNDTIANGGQSFLASKSSIEDLDFFNLNIGNLPPNETVKITLTITSEIGTHINGQLHYYLHHSLFPTYNFNFNLNIIIKLSNSIESIINWYGNSKRILNINSSNTGCGSDDGDDDVIKVLYNNSNNKEIKIKSNDKLNSIEDSLVLIIQPSIINDEPKSMIEYNKIENSLAVSINYYSSFKDIKIEDMNQKSEFIFLIDCSGSMVGEPMRKVKRAMEIIIRSLNENQHRVNVVCFGSSFKKVFKVSRDYNDETLECLSKYIQSIEANLGGTELLTPIKNILSSPPNPEYPRQLFILTDGEAPHRDKIIHYLSKESNTTRIFTYGIGDSVDIDLIIGLSNACKGHYEFITDNDNFEKQVMKLLNISLKPMFSNIKLDLSTLFSNNKNKNKNNNNCKEDIIIQSPSQIRPLFYQERMIVYLMIESLSTRLKDIINDSIENSKPLIITMTCDGPKGDKLSIPIELDLKNNCIISSSSSSSSSSSSSSSSSSSSSSSSSSSSSSTTTATTNQNQIHRLSAYHQIKDLEEKERKKKKDNKTRIVELSKKYGILSKHTSFIVKCESTKPTLESMDFIDIIDQFSFENQVSATKNKSQCLLTKSKKSKTAAPTTTTTTTITKKRFSDVDEDISRQSVKKSKKSETKEETTKTTSSKTKSSSSFDLIDLLRIQRANGSWTKSTISQMGISIGNAPVELSSDQLYNIWVTLIVISKIIKLFPNEKIEYEFAIQKSKKWVKLELSKLNLPNTTFDKFSLKANSLC</sequence>
<gene>
    <name type="ORF">DDB_G0267758</name>
</gene>
<name>Y7758_DICDI</name>
<dbReference type="EMBL" id="AAFI02000003">
    <property type="protein sequence ID" value="EAL73332.1"/>
    <property type="molecule type" value="Genomic_DNA"/>
</dbReference>
<dbReference type="RefSeq" id="XP_647286.1">
    <property type="nucleotide sequence ID" value="XM_642194.1"/>
</dbReference>
<dbReference type="SMR" id="Q55G98"/>
<dbReference type="FunCoup" id="Q55G98">
    <property type="interactions" value="5"/>
</dbReference>
<dbReference type="PaxDb" id="44689-DDB0305054"/>
<dbReference type="EnsemblProtists" id="EAL73332">
    <property type="protein sequence ID" value="EAL73332"/>
    <property type="gene ID" value="DDB_G0267758"/>
</dbReference>
<dbReference type="GeneID" id="8616092"/>
<dbReference type="KEGG" id="ddi:DDB_G0267758"/>
<dbReference type="dictyBase" id="DDB_G0267758"/>
<dbReference type="VEuPathDB" id="AmoebaDB:DDB_G0267758"/>
<dbReference type="eggNOG" id="ENOG502QRPK">
    <property type="taxonomic scope" value="Eukaryota"/>
</dbReference>
<dbReference type="HOGENOM" id="CLU_327738_0_0_1"/>
<dbReference type="InParanoid" id="Q55G98"/>
<dbReference type="OMA" id="DTEINDC"/>
<dbReference type="PhylomeDB" id="Q55G98"/>
<dbReference type="PRO" id="PR:Q55G98"/>
<dbReference type="Proteomes" id="UP000002195">
    <property type="component" value="Chromosome 1"/>
</dbReference>
<dbReference type="Gene3D" id="3.40.50.410">
    <property type="entry name" value="von Willebrand factor, type A domain"/>
    <property type="match status" value="1"/>
</dbReference>
<dbReference type="InterPro" id="IPR013694">
    <property type="entry name" value="VIT"/>
</dbReference>
<dbReference type="InterPro" id="IPR002035">
    <property type="entry name" value="VWF_A"/>
</dbReference>
<dbReference type="InterPro" id="IPR036465">
    <property type="entry name" value="vWFA_dom_sf"/>
</dbReference>
<dbReference type="PANTHER" id="PTHR45737">
    <property type="entry name" value="VON WILLEBRAND FACTOR A DOMAIN-CONTAINING PROTEIN 5A"/>
    <property type="match status" value="1"/>
</dbReference>
<dbReference type="PANTHER" id="PTHR45737:SF1">
    <property type="entry name" value="VON WILLEBRAND FACTOR A DOMAIN-CONTAINING PROTEIN DDB_G0267758-RELATED"/>
    <property type="match status" value="1"/>
</dbReference>
<dbReference type="Pfam" id="PF08487">
    <property type="entry name" value="VIT"/>
    <property type="match status" value="1"/>
</dbReference>
<dbReference type="Pfam" id="PF13768">
    <property type="entry name" value="VWA_3"/>
    <property type="match status" value="1"/>
</dbReference>
<dbReference type="SMART" id="SM00609">
    <property type="entry name" value="VIT"/>
    <property type="match status" value="1"/>
</dbReference>
<dbReference type="SMART" id="SM00327">
    <property type="entry name" value="VWA"/>
    <property type="match status" value="1"/>
</dbReference>
<dbReference type="SUPFAM" id="SSF53300">
    <property type="entry name" value="vWA-like"/>
    <property type="match status" value="1"/>
</dbReference>
<dbReference type="PROSITE" id="PS51468">
    <property type="entry name" value="VIT"/>
    <property type="match status" value="1"/>
</dbReference>
<dbReference type="PROSITE" id="PS50234">
    <property type="entry name" value="VWFA"/>
    <property type="match status" value="1"/>
</dbReference>
<reference key="1">
    <citation type="journal article" date="2005" name="Nature">
        <title>The genome of the social amoeba Dictyostelium discoideum.</title>
        <authorList>
            <person name="Eichinger L."/>
            <person name="Pachebat J.A."/>
            <person name="Gloeckner G."/>
            <person name="Rajandream M.A."/>
            <person name="Sucgang R."/>
            <person name="Berriman M."/>
            <person name="Song J."/>
            <person name="Olsen R."/>
            <person name="Szafranski K."/>
            <person name="Xu Q."/>
            <person name="Tunggal B."/>
            <person name="Kummerfeld S."/>
            <person name="Madera M."/>
            <person name="Konfortov B.A."/>
            <person name="Rivero F."/>
            <person name="Bankier A.T."/>
            <person name="Lehmann R."/>
            <person name="Hamlin N."/>
            <person name="Davies R."/>
            <person name="Gaudet P."/>
            <person name="Fey P."/>
            <person name="Pilcher K."/>
            <person name="Chen G."/>
            <person name="Saunders D."/>
            <person name="Sodergren E.J."/>
            <person name="Davis P."/>
            <person name="Kerhornou A."/>
            <person name="Nie X."/>
            <person name="Hall N."/>
            <person name="Anjard C."/>
            <person name="Hemphill L."/>
            <person name="Bason N."/>
            <person name="Farbrother P."/>
            <person name="Desany B."/>
            <person name="Just E."/>
            <person name="Morio T."/>
            <person name="Rost R."/>
            <person name="Churcher C.M."/>
            <person name="Cooper J."/>
            <person name="Haydock S."/>
            <person name="van Driessche N."/>
            <person name="Cronin A."/>
            <person name="Goodhead I."/>
            <person name="Muzny D.M."/>
            <person name="Mourier T."/>
            <person name="Pain A."/>
            <person name="Lu M."/>
            <person name="Harper D."/>
            <person name="Lindsay R."/>
            <person name="Hauser H."/>
            <person name="James K.D."/>
            <person name="Quiles M."/>
            <person name="Madan Babu M."/>
            <person name="Saito T."/>
            <person name="Buchrieser C."/>
            <person name="Wardroper A."/>
            <person name="Felder M."/>
            <person name="Thangavelu M."/>
            <person name="Johnson D."/>
            <person name="Knights A."/>
            <person name="Loulseged H."/>
            <person name="Mungall K.L."/>
            <person name="Oliver K."/>
            <person name="Price C."/>
            <person name="Quail M.A."/>
            <person name="Urushihara H."/>
            <person name="Hernandez J."/>
            <person name="Rabbinowitsch E."/>
            <person name="Steffen D."/>
            <person name="Sanders M."/>
            <person name="Ma J."/>
            <person name="Kohara Y."/>
            <person name="Sharp S."/>
            <person name="Simmonds M.N."/>
            <person name="Spiegler S."/>
            <person name="Tivey A."/>
            <person name="Sugano S."/>
            <person name="White B."/>
            <person name="Walker D."/>
            <person name="Woodward J.R."/>
            <person name="Winckler T."/>
            <person name="Tanaka Y."/>
            <person name="Shaulsky G."/>
            <person name="Schleicher M."/>
            <person name="Weinstock G.M."/>
            <person name="Rosenthal A."/>
            <person name="Cox E.C."/>
            <person name="Chisholm R.L."/>
            <person name="Gibbs R.A."/>
            <person name="Loomis W.F."/>
            <person name="Platzer M."/>
            <person name="Kay R.R."/>
            <person name="Williams J.G."/>
            <person name="Dear P.H."/>
            <person name="Noegel A.A."/>
            <person name="Barrell B.G."/>
            <person name="Kuspa A."/>
        </authorList>
    </citation>
    <scope>NUCLEOTIDE SEQUENCE [LARGE SCALE GENOMIC DNA]</scope>
    <source>
        <strain>AX4</strain>
    </source>
</reference>
<evidence type="ECO:0000255" key="1">
    <source>
        <dbReference type="PROSITE-ProRule" id="PRU00219"/>
    </source>
</evidence>
<evidence type="ECO:0000255" key="2">
    <source>
        <dbReference type="PROSITE-ProRule" id="PRU00801"/>
    </source>
</evidence>
<evidence type="ECO:0000256" key="3">
    <source>
        <dbReference type="SAM" id="MobiDB-lite"/>
    </source>
</evidence>
<proteinExistence type="predicted"/>
<keyword id="KW-1185">Reference proteome</keyword>
<feature type="chain" id="PRO_0000389211" description="von Willebrand factor A domain-containing protein DDB_G0267758">
    <location>
        <begin position="1"/>
        <end position="878"/>
    </location>
</feature>
<feature type="domain" description="VIT" evidence="2">
    <location>
        <begin position="36"/>
        <end position="169"/>
    </location>
</feature>
<feature type="domain" description="VWFA" evidence="1">
    <location>
        <begin position="316"/>
        <end position="496"/>
    </location>
</feature>
<feature type="region of interest" description="Disordered" evidence="3">
    <location>
        <begin position="595"/>
        <end position="638"/>
    </location>
</feature>
<feature type="region of interest" description="Disordered" evidence="3">
    <location>
        <begin position="752"/>
        <end position="774"/>
    </location>
</feature>
<feature type="compositionally biased region" description="Low complexity" evidence="3">
    <location>
        <begin position="595"/>
        <end position="623"/>
    </location>
</feature>
<feature type="compositionally biased region" description="Polar residues" evidence="3">
    <location>
        <begin position="624"/>
        <end position="635"/>
    </location>
</feature>
<protein>
    <recommendedName>
        <fullName>von Willebrand factor A domain-containing protein DDB_G0267758</fullName>
    </recommendedName>
</protein>
<accession>Q55G98</accession>
<organism>
    <name type="scientific">Dictyostelium discoideum</name>
    <name type="common">Social amoeba</name>
    <dbReference type="NCBI Taxonomy" id="44689"/>
    <lineage>
        <taxon>Eukaryota</taxon>
        <taxon>Amoebozoa</taxon>
        <taxon>Evosea</taxon>
        <taxon>Eumycetozoa</taxon>
        <taxon>Dictyostelia</taxon>
        <taxon>Dictyosteliales</taxon>
        <taxon>Dictyosteliaceae</taxon>
        <taxon>Dictyostelium</taxon>
    </lineage>
</organism>